<comment type="subcellular location">
    <subcellularLocation>
        <location evidence="2">Membrane</location>
        <topology evidence="2">Multi-pass membrane protein</topology>
    </subcellularLocation>
</comment>
<gene>
    <name type="ordered locus">MIMI_L323</name>
</gene>
<proteinExistence type="inferred from homology"/>
<evidence type="ECO:0000255" key="1"/>
<evidence type="ECO:0000305" key="2"/>
<feature type="initiator methionine" description="Removed" evidence="1">
    <location>
        <position position="1"/>
    </location>
</feature>
<feature type="chain" id="PRO_0000247299" description="Uncharacterized protein L323">
    <location>
        <begin position="2"/>
        <end position="283"/>
    </location>
</feature>
<feature type="transmembrane region" description="Helical" evidence="1">
    <location>
        <begin position="181"/>
        <end position="201"/>
    </location>
</feature>
<feature type="transmembrane region" description="Helical" evidence="1">
    <location>
        <begin position="250"/>
        <end position="270"/>
    </location>
</feature>
<feature type="lipid moiety-binding region" description="N-myristoyl glycine; by host" evidence="1">
    <location>
        <position position="2"/>
    </location>
</feature>
<feature type="glycosylation site" description="N-linked (GlcNAc...) asparagine; by host" evidence="1">
    <location>
        <position position="31"/>
    </location>
</feature>
<feature type="glycosylation site" description="N-linked (GlcNAc...) asparagine; by host" evidence="1">
    <location>
        <position position="95"/>
    </location>
</feature>
<feature type="glycosylation site" description="N-linked (GlcNAc...) asparagine; by host" evidence="1">
    <location>
        <position position="105"/>
    </location>
</feature>
<feature type="glycosylation site" description="N-linked (GlcNAc...) asparagine; by host" evidence="1">
    <location>
        <position position="108"/>
    </location>
</feature>
<feature type="glycosylation site" description="N-linked (GlcNAc...) asparagine; by host" evidence="1">
    <location>
        <position position="137"/>
    </location>
</feature>
<feature type="glycosylation site" description="N-linked (GlcNAc...) asparagine; by host" evidence="1">
    <location>
        <position position="147"/>
    </location>
</feature>
<feature type="glycosylation site" description="N-linked (GlcNAc...) asparagine; by host" evidence="1">
    <location>
        <position position="277"/>
    </location>
</feature>
<reference key="1">
    <citation type="journal article" date="2004" name="Science">
        <title>The 1.2-megabase genome sequence of Mimivirus.</title>
        <authorList>
            <person name="Raoult D."/>
            <person name="Audic S."/>
            <person name="Robert C."/>
            <person name="Abergel C."/>
            <person name="Renesto P."/>
            <person name="Ogata H."/>
            <person name="La Scola B."/>
            <person name="Susan M."/>
            <person name="Claverie J.-M."/>
        </authorList>
    </citation>
    <scope>NUCLEOTIDE SEQUENCE [LARGE SCALE GENOMIC DNA]</scope>
    <source>
        <strain>Rowbotham-Bradford</strain>
    </source>
</reference>
<sequence length="283" mass="29397">MGASASTNEQIIENRILNEAYNSCPSVGTANVTTLSGIKFEAPANCNPPSAFVIGQTATVDSNCLLTSLQKGAASAASKLSSQSKAGLGISVSTNISEVENSIANITNNTCAGLATNNVVDITDTVIKACQFRVVQNASSKVSCQINNTQNLISKIAADATSQAKGGSLFGDLFGGGLGGIIAAIIIIVIIAVIIGAVVYFIKQSSKNKGAEKIIENPETAALLVGGFKSFIGGASDFVDGLKKTNMYKFIVLLIMVLIIVILLKTLDIPNPINHPNDSNRIY</sequence>
<organismHost>
    <name type="scientific">Acanthamoeba polyphaga</name>
    <name type="common">Amoeba</name>
    <dbReference type="NCBI Taxonomy" id="5757"/>
</organismHost>
<protein>
    <recommendedName>
        <fullName>Uncharacterized protein L323</fullName>
    </recommendedName>
</protein>
<accession>Q5UQR8</accession>
<dbReference type="EMBL" id="AY653733">
    <property type="protein sequence ID" value="AAV50592.1"/>
    <property type="molecule type" value="Genomic_DNA"/>
</dbReference>
<dbReference type="SMR" id="Q5UQR8"/>
<dbReference type="KEGG" id="vg:9924940"/>
<dbReference type="OrthoDB" id="19229at10239"/>
<dbReference type="Proteomes" id="UP000001134">
    <property type="component" value="Genome"/>
</dbReference>
<dbReference type="GO" id="GO:0016020">
    <property type="term" value="C:membrane"/>
    <property type="evidence" value="ECO:0007669"/>
    <property type="project" value="UniProtKB-SubCell"/>
</dbReference>
<name>YL323_MIMIV</name>
<organism>
    <name type="scientific">Acanthamoeba polyphaga mimivirus</name>
    <name type="common">APMV</name>
    <dbReference type="NCBI Taxonomy" id="212035"/>
    <lineage>
        <taxon>Viruses</taxon>
        <taxon>Varidnaviria</taxon>
        <taxon>Bamfordvirae</taxon>
        <taxon>Nucleocytoviricota</taxon>
        <taxon>Megaviricetes</taxon>
        <taxon>Imitervirales</taxon>
        <taxon>Mimiviridae</taxon>
        <taxon>Megamimivirinae</taxon>
        <taxon>Mimivirus</taxon>
        <taxon>Mimivirus bradfordmassiliense</taxon>
    </lineage>
</organism>
<keyword id="KW-0325">Glycoprotein</keyword>
<keyword id="KW-0449">Lipoprotein</keyword>
<keyword id="KW-0472">Membrane</keyword>
<keyword id="KW-0519">Myristate</keyword>
<keyword id="KW-1185">Reference proteome</keyword>
<keyword id="KW-0812">Transmembrane</keyword>
<keyword id="KW-1133">Transmembrane helix</keyword>